<reference evidence="7" key="1">
    <citation type="journal article" date="1998" name="Science">
        <title>Genome sequence of the nematode C. elegans: a platform for investigating biology.</title>
        <authorList>
            <consortium name="The C. elegans sequencing consortium"/>
        </authorList>
    </citation>
    <scope>NUCLEOTIDE SEQUENCE [LARGE SCALE GENOMIC DNA]</scope>
    <source>
        <strain evidence="7">Bristol N2</strain>
    </source>
</reference>
<reference evidence="6" key="2">
    <citation type="journal article" date="2012" name="Gene">
        <title>A regulatory cascade of three transcription factors in a single specific neuron, DVC, in Caenorhabditis elegans.</title>
        <authorList>
            <person name="Feng H."/>
            <person name="Reece-Hoyes J.S."/>
            <person name="Walhout A.J."/>
            <person name="Hope I.A."/>
        </authorList>
    </citation>
    <scope>FUNCTION</scope>
    <scope>INTERACTION WITH CEH-14</scope>
    <scope>SUBCELLULAR LOCATION</scope>
    <scope>DEVELOPMENTAL STAGE</scope>
</reference>
<feature type="chain" id="PRO_0000453378" description="Homeobox protein ceh-63">
    <location>
        <begin position="1"/>
        <end position="152"/>
    </location>
</feature>
<feature type="DNA-binding region" description="Homeobox" evidence="1">
    <location>
        <begin position="41"/>
        <end position="100"/>
    </location>
</feature>
<feature type="region of interest" description="Disordered" evidence="3">
    <location>
        <begin position="21"/>
        <end position="48"/>
    </location>
</feature>
<feature type="region of interest" description="Disordered" evidence="3">
    <location>
        <begin position="92"/>
        <end position="126"/>
    </location>
</feature>
<feature type="compositionally biased region" description="Polar residues" evidence="3">
    <location>
        <begin position="21"/>
        <end position="30"/>
    </location>
</feature>
<feature type="compositionally biased region" description="Basic residues" evidence="3">
    <location>
        <begin position="35"/>
        <end position="44"/>
    </location>
</feature>
<feature type="compositionally biased region" description="Polar residues" evidence="3">
    <location>
        <begin position="116"/>
        <end position="126"/>
    </location>
</feature>
<feature type="splice variant" id="VSP_061132" description="In isoform b." evidence="6">
    <location>
        <begin position="1"/>
        <end position="106"/>
    </location>
</feature>
<gene>
    <name evidence="8" type="primary">ceh-63</name>
    <name evidence="8" type="ORF">C02F12.10</name>
</gene>
<keyword id="KW-0025">Alternative splicing</keyword>
<keyword id="KW-0238">DNA-binding</keyword>
<keyword id="KW-0371">Homeobox</keyword>
<keyword id="KW-0539">Nucleus</keyword>
<keyword id="KW-1185">Reference proteome</keyword>
<name>CEH63_CAEEL</name>
<sequence>MTSKTNMTSNKFAYDFFPWSNDTNSSQQIKNIKPPPKRSNRPTKRTTFTSEQVTLLELEFAKNEYICKDRRGELAQTIELTECQVKTWFQNRRTKKRRCTSPLRKSMMKKSDERSPSPQNPSSQHVQNLQTFFHSWPSHFAYSLPSDQQNNV</sequence>
<comment type="function">
    <text evidence="4">Probable transcription factor, modulating expression of helix-loop-helix protein mbr-1, perhaps acting in concert with homeobox protein ceh-14 (PubMed:22207033). May play a minor role in axon guidance in the DVC interneuron (PubMed:22207033).</text>
</comment>
<comment type="subunit">
    <text evidence="4">May interact with homeobox protein ceh-14.</text>
</comment>
<comment type="subcellular location">
    <subcellularLocation>
        <location evidence="2 4">Nucleus</location>
    </subcellularLocation>
</comment>
<comment type="alternative products">
    <event type="alternative splicing"/>
    <isoform>
        <id>A3FPJ2-1</id>
        <name evidence="8">a</name>
        <sequence type="displayed"/>
    </isoform>
    <isoform>
        <id>A3FPJ2-2</id>
        <name evidence="9">b</name>
        <sequence type="described" ref="VSP_061132"/>
    </isoform>
</comment>
<comment type="developmental stage">
    <text evidence="4">First expressed in comma stage embryos, continuing into young adult hermaphrodites (PubMed:22207033). Expressed in the single interneuron DVC, in the tail ganglion, from larval L3 stage and throughout lifetime (PubMed:22207033). Expressed in the ut2 and ut3 cells in the uterus in young adults (PubMed:22207033).</text>
</comment>
<organism evidence="7">
    <name type="scientific">Caenorhabditis elegans</name>
    <dbReference type="NCBI Taxonomy" id="6239"/>
    <lineage>
        <taxon>Eukaryota</taxon>
        <taxon>Metazoa</taxon>
        <taxon>Ecdysozoa</taxon>
        <taxon>Nematoda</taxon>
        <taxon>Chromadorea</taxon>
        <taxon>Rhabditida</taxon>
        <taxon>Rhabditina</taxon>
        <taxon>Rhabditomorpha</taxon>
        <taxon>Rhabditoidea</taxon>
        <taxon>Rhabditidae</taxon>
        <taxon>Peloderinae</taxon>
        <taxon>Caenorhabditis</taxon>
    </lineage>
</organism>
<evidence type="ECO:0000255" key="1">
    <source>
        <dbReference type="PROSITE-ProRule" id="PRU00108"/>
    </source>
</evidence>
<evidence type="ECO:0000255" key="2">
    <source>
        <dbReference type="RuleBase" id="RU000682"/>
    </source>
</evidence>
<evidence type="ECO:0000256" key="3">
    <source>
        <dbReference type="SAM" id="MobiDB-lite"/>
    </source>
</evidence>
<evidence type="ECO:0000269" key="4">
    <source>
    </source>
</evidence>
<evidence type="ECO:0000303" key="5">
    <source>
    </source>
</evidence>
<evidence type="ECO:0000305" key="6"/>
<evidence type="ECO:0000312" key="7">
    <source>
        <dbReference type="Proteomes" id="UP000001940"/>
    </source>
</evidence>
<evidence type="ECO:0000312" key="8">
    <source>
        <dbReference type="WormBase" id="C02F12.10a"/>
    </source>
</evidence>
<evidence type="ECO:0000312" key="9">
    <source>
        <dbReference type="WormBase" id="C02F12.10b"/>
    </source>
</evidence>
<proteinExistence type="evidence at protein level"/>
<dbReference type="EMBL" id="BX284606">
    <property type="protein sequence ID" value="CCD62377.1"/>
    <property type="molecule type" value="Genomic_DNA"/>
</dbReference>
<dbReference type="EMBL" id="BX284606">
    <property type="protein sequence ID" value="CTQ87023.1"/>
    <property type="molecule type" value="Genomic_DNA"/>
</dbReference>
<dbReference type="RefSeq" id="NP_001123094.1">
    <molecule id="A3FPJ2-1"/>
    <property type="nucleotide sequence ID" value="NM_001129622.4"/>
</dbReference>
<dbReference type="RefSeq" id="NP_001300312.1">
    <property type="nucleotide sequence ID" value="NM_001313383.1"/>
</dbReference>
<dbReference type="RefSeq" id="NP_001364844.1">
    <molecule id="A3FPJ2-2"/>
    <property type="nucleotide sequence ID" value="NM_001377614.1"/>
</dbReference>
<dbReference type="SMR" id="A3FPJ2"/>
<dbReference type="FunCoup" id="A3FPJ2">
    <property type="interactions" value="106"/>
</dbReference>
<dbReference type="STRING" id="6239.C02F12.10a.1"/>
<dbReference type="PaxDb" id="6239-C02F12.10"/>
<dbReference type="EnsemblMetazoa" id="C02F12.10a.1">
    <molecule id="A3FPJ2-1"/>
    <property type="protein sequence ID" value="C02F12.10a.1"/>
    <property type="gene ID" value="WBGene00045215"/>
</dbReference>
<dbReference type="EnsemblMetazoa" id="C02F12.10b.1">
    <molecule id="A3FPJ2-2"/>
    <property type="protein sequence ID" value="C02F12.10b.1"/>
    <property type="gene ID" value="WBGene00045215"/>
</dbReference>
<dbReference type="GeneID" id="6418830"/>
<dbReference type="KEGG" id="cel:CELE_C02F12.10"/>
<dbReference type="UCSC" id="C02F12.10">
    <molecule id="A3FPJ2-1"/>
    <property type="organism name" value="c. elegans"/>
</dbReference>
<dbReference type="AGR" id="WB:WBGene00045215"/>
<dbReference type="CTD" id="6418830"/>
<dbReference type="WormBase" id="C02F12.10a">
    <molecule id="A3FPJ2-1"/>
    <property type="protein sequence ID" value="CE40680"/>
    <property type="gene ID" value="WBGene00045215"/>
    <property type="gene designation" value="ceh-63"/>
</dbReference>
<dbReference type="WormBase" id="C02F12.10b">
    <molecule id="A3FPJ2-2"/>
    <property type="protein sequence ID" value="CE50485"/>
    <property type="gene ID" value="WBGene00045215"/>
    <property type="gene designation" value="ceh-63"/>
</dbReference>
<dbReference type="eggNOG" id="KOG0489">
    <property type="taxonomic scope" value="Eukaryota"/>
</dbReference>
<dbReference type="GeneTree" id="ENSGT00970000196641"/>
<dbReference type="HOGENOM" id="CLU_1564299_0_0_1"/>
<dbReference type="InParanoid" id="A3FPJ2"/>
<dbReference type="OMA" id="AKNEYIC"/>
<dbReference type="OrthoDB" id="6159439at2759"/>
<dbReference type="PhylomeDB" id="A3FPJ2"/>
<dbReference type="PRO" id="PR:A3FPJ2"/>
<dbReference type="Proteomes" id="UP000001940">
    <property type="component" value="Chromosome X"/>
</dbReference>
<dbReference type="Bgee" id="WBGene00045215">
    <property type="expression patterns" value="Expressed in material anatomical entity and 5 other cell types or tissues"/>
</dbReference>
<dbReference type="ExpressionAtlas" id="A3FPJ2">
    <property type="expression patterns" value="baseline and differential"/>
</dbReference>
<dbReference type="GO" id="GO:0005634">
    <property type="term" value="C:nucleus"/>
    <property type="evidence" value="ECO:0000314"/>
    <property type="project" value="WormBase"/>
</dbReference>
<dbReference type="GO" id="GO:0000981">
    <property type="term" value="F:DNA-binding transcription factor activity, RNA polymerase II-specific"/>
    <property type="evidence" value="ECO:0007669"/>
    <property type="project" value="InterPro"/>
</dbReference>
<dbReference type="GO" id="GO:0000977">
    <property type="term" value="F:RNA polymerase II transcription regulatory region sequence-specific DNA binding"/>
    <property type="evidence" value="ECO:0000314"/>
    <property type="project" value="WormBase"/>
</dbReference>
<dbReference type="CDD" id="cd00086">
    <property type="entry name" value="homeodomain"/>
    <property type="match status" value="1"/>
</dbReference>
<dbReference type="FunFam" id="1.10.10.60:FF:000725">
    <property type="entry name" value="C. Elegans Homeobox"/>
    <property type="match status" value="1"/>
</dbReference>
<dbReference type="Gene3D" id="1.10.10.60">
    <property type="entry name" value="Homeodomain-like"/>
    <property type="match status" value="1"/>
</dbReference>
<dbReference type="InterPro" id="IPR001356">
    <property type="entry name" value="HD"/>
</dbReference>
<dbReference type="InterPro" id="IPR020479">
    <property type="entry name" value="HD_metazoa"/>
</dbReference>
<dbReference type="InterPro" id="IPR017970">
    <property type="entry name" value="Homeobox_CS"/>
</dbReference>
<dbReference type="InterPro" id="IPR050848">
    <property type="entry name" value="Homeobox_TF"/>
</dbReference>
<dbReference type="InterPro" id="IPR009057">
    <property type="entry name" value="Homeodomain-like_sf"/>
</dbReference>
<dbReference type="PANTHER" id="PTHR24333">
    <property type="entry name" value="HOMEO BOX HB9 LIKE A-RELATED"/>
    <property type="match status" value="1"/>
</dbReference>
<dbReference type="PANTHER" id="PTHR24333:SF8">
    <property type="entry name" value="HOMEOBOX PROTEIN CEH-62"/>
    <property type="match status" value="1"/>
</dbReference>
<dbReference type="Pfam" id="PF00046">
    <property type="entry name" value="Homeodomain"/>
    <property type="match status" value="1"/>
</dbReference>
<dbReference type="PRINTS" id="PR00024">
    <property type="entry name" value="HOMEOBOX"/>
</dbReference>
<dbReference type="SMART" id="SM00389">
    <property type="entry name" value="HOX"/>
    <property type="match status" value="1"/>
</dbReference>
<dbReference type="SUPFAM" id="SSF46689">
    <property type="entry name" value="Homeodomain-like"/>
    <property type="match status" value="1"/>
</dbReference>
<dbReference type="PROSITE" id="PS00027">
    <property type="entry name" value="HOMEOBOX_1"/>
    <property type="match status" value="1"/>
</dbReference>
<dbReference type="PROSITE" id="PS50071">
    <property type="entry name" value="HOMEOBOX_2"/>
    <property type="match status" value="1"/>
</dbReference>
<protein>
    <recommendedName>
        <fullName evidence="5">Homeobox protein ceh-63</fullName>
    </recommendedName>
</protein>
<accession>A3FPJ2</accession>
<accession>A0A0K3ASL7</accession>